<reference key="1">
    <citation type="journal article" date="1993" name="J. Bacteriol.">
        <title>Cloning, nucleotide sequence, and regulation of the Bacillus subtilis pbpE operon, which codes for penicillin-binding protein 4* and an apparent amino acid racemase.</title>
        <authorList>
            <person name="Popham D.L."/>
            <person name="Setlow P.L."/>
        </authorList>
    </citation>
    <scope>NUCLEOTIDE SEQUENCE [GENOMIC DNA]</scope>
    <scope>PROTEIN SEQUENCE OF 1-14</scope>
</reference>
<reference key="2">
    <citation type="submission" date="1997-04" db="EMBL/GenBank/DDBJ databases">
        <authorList>
            <person name="Denizot F."/>
        </authorList>
    </citation>
    <scope>NUCLEOTIDE SEQUENCE [GENOMIC DNA]</scope>
    <source>
        <strain>168</strain>
    </source>
</reference>
<reference key="3">
    <citation type="journal article" date="1997" name="Nature">
        <title>The complete genome sequence of the Gram-positive bacterium Bacillus subtilis.</title>
        <authorList>
            <person name="Kunst F."/>
            <person name="Ogasawara N."/>
            <person name="Moszer I."/>
            <person name="Albertini A.M."/>
            <person name="Alloni G."/>
            <person name="Azevedo V."/>
            <person name="Bertero M.G."/>
            <person name="Bessieres P."/>
            <person name="Bolotin A."/>
            <person name="Borchert S."/>
            <person name="Borriss R."/>
            <person name="Boursier L."/>
            <person name="Brans A."/>
            <person name="Braun M."/>
            <person name="Brignell S.C."/>
            <person name="Bron S."/>
            <person name="Brouillet S."/>
            <person name="Bruschi C.V."/>
            <person name="Caldwell B."/>
            <person name="Capuano V."/>
            <person name="Carter N.M."/>
            <person name="Choi S.-K."/>
            <person name="Codani J.-J."/>
            <person name="Connerton I.F."/>
            <person name="Cummings N.J."/>
            <person name="Daniel R.A."/>
            <person name="Denizot F."/>
            <person name="Devine K.M."/>
            <person name="Duesterhoeft A."/>
            <person name="Ehrlich S.D."/>
            <person name="Emmerson P.T."/>
            <person name="Entian K.-D."/>
            <person name="Errington J."/>
            <person name="Fabret C."/>
            <person name="Ferrari E."/>
            <person name="Foulger D."/>
            <person name="Fritz C."/>
            <person name="Fujita M."/>
            <person name="Fujita Y."/>
            <person name="Fuma S."/>
            <person name="Galizzi A."/>
            <person name="Galleron N."/>
            <person name="Ghim S.-Y."/>
            <person name="Glaser P."/>
            <person name="Goffeau A."/>
            <person name="Golightly E.J."/>
            <person name="Grandi G."/>
            <person name="Guiseppi G."/>
            <person name="Guy B.J."/>
            <person name="Haga K."/>
            <person name="Haiech J."/>
            <person name="Harwood C.R."/>
            <person name="Henaut A."/>
            <person name="Hilbert H."/>
            <person name="Holsappel S."/>
            <person name="Hosono S."/>
            <person name="Hullo M.-F."/>
            <person name="Itaya M."/>
            <person name="Jones L.-M."/>
            <person name="Joris B."/>
            <person name="Karamata D."/>
            <person name="Kasahara Y."/>
            <person name="Klaerr-Blanchard M."/>
            <person name="Klein C."/>
            <person name="Kobayashi Y."/>
            <person name="Koetter P."/>
            <person name="Koningstein G."/>
            <person name="Krogh S."/>
            <person name="Kumano M."/>
            <person name="Kurita K."/>
            <person name="Lapidus A."/>
            <person name="Lardinois S."/>
            <person name="Lauber J."/>
            <person name="Lazarevic V."/>
            <person name="Lee S.-M."/>
            <person name="Levine A."/>
            <person name="Liu H."/>
            <person name="Masuda S."/>
            <person name="Mauel C."/>
            <person name="Medigue C."/>
            <person name="Medina N."/>
            <person name="Mellado R.P."/>
            <person name="Mizuno M."/>
            <person name="Moestl D."/>
            <person name="Nakai S."/>
            <person name="Noback M."/>
            <person name="Noone D."/>
            <person name="O'Reilly M."/>
            <person name="Ogawa K."/>
            <person name="Ogiwara A."/>
            <person name="Oudega B."/>
            <person name="Park S.-H."/>
            <person name="Parro V."/>
            <person name="Pohl T.M."/>
            <person name="Portetelle D."/>
            <person name="Porwollik S."/>
            <person name="Prescott A.M."/>
            <person name="Presecan E."/>
            <person name="Pujic P."/>
            <person name="Purnelle B."/>
            <person name="Rapoport G."/>
            <person name="Rey M."/>
            <person name="Reynolds S."/>
            <person name="Rieger M."/>
            <person name="Rivolta C."/>
            <person name="Rocha E."/>
            <person name="Roche B."/>
            <person name="Rose M."/>
            <person name="Sadaie Y."/>
            <person name="Sato T."/>
            <person name="Scanlan E."/>
            <person name="Schleich S."/>
            <person name="Schroeter R."/>
            <person name="Scoffone F."/>
            <person name="Sekiguchi J."/>
            <person name="Sekowska A."/>
            <person name="Seror S.J."/>
            <person name="Serror P."/>
            <person name="Shin B.-S."/>
            <person name="Soldo B."/>
            <person name="Sorokin A."/>
            <person name="Tacconi E."/>
            <person name="Takagi T."/>
            <person name="Takahashi H."/>
            <person name="Takemaru K."/>
            <person name="Takeuchi M."/>
            <person name="Tamakoshi A."/>
            <person name="Tanaka T."/>
            <person name="Terpstra P."/>
            <person name="Tognoni A."/>
            <person name="Tosato V."/>
            <person name="Uchiyama S."/>
            <person name="Vandenbol M."/>
            <person name="Vannier F."/>
            <person name="Vassarotti A."/>
            <person name="Viari A."/>
            <person name="Wambutt R."/>
            <person name="Wedler E."/>
            <person name="Wedler H."/>
            <person name="Weitzenegger T."/>
            <person name="Winters P."/>
            <person name="Wipat A."/>
            <person name="Yamamoto H."/>
            <person name="Yamane K."/>
            <person name="Yasumoto K."/>
            <person name="Yata K."/>
            <person name="Yoshida K."/>
            <person name="Yoshikawa H.-F."/>
            <person name="Zumstein E."/>
            <person name="Yoshikawa H."/>
            <person name="Danchin A."/>
        </authorList>
    </citation>
    <scope>NUCLEOTIDE SEQUENCE [LARGE SCALE GENOMIC DNA]</scope>
    <source>
        <strain>168</strain>
    </source>
</reference>
<reference key="4">
    <citation type="journal article" date="1986" name="J. Bacteriol.">
        <title>Correlation of penicillin-binding protein composition with different functions of two membranes in Bacillus subtilis forespores.</title>
        <authorList>
            <person name="Buchanan C.E."/>
            <person name="Neyman S.L."/>
        </authorList>
    </citation>
    <scope>SUBCELLULAR LOCATION</scope>
    <scope>DEVELOPMENTAL STAGE</scope>
    <scope>PENICILLIN-BINDING</scope>
    <source>
        <strain>168</strain>
    </source>
</reference>
<comment type="function">
    <text>Probably involved in peptidoglycan modification during cortex synthesis.</text>
</comment>
<comment type="pathway">
    <text>Cell wall biogenesis; peptidoglycan biosynthesis.</text>
</comment>
<comment type="subcellular location">
    <subcellularLocation>
        <location evidence="2">Forespore outer membrane</location>
        <topology>Peripheral membrane protein</topology>
    </subcellularLocation>
</comment>
<comment type="developmental stage">
    <text evidence="2">Expressed during sporulation. Detected in mature spores (PubMed:3080407).</text>
</comment>
<comment type="similarity">
    <text evidence="3">Belongs to the beta-lactamase family.</text>
</comment>
<comment type="sequence caution" evidence="3">
    <conflict type="erroneous initiation">
        <sequence resource="EMBL-CDS" id="CAB08016"/>
    </conflict>
    <text>Truncated N-terminus.</text>
</comment>
<accession>P32959</accession>
<feature type="chain" id="PRO_0000195465" description="Penicillin-binding protein 4*">
    <location>
        <begin position="1"/>
        <end position="451"/>
    </location>
</feature>
<feature type="active site" description="Acyl-ester intermediate" evidence="1">
    <location>
        <position position="61"/>
    </location>
</feature>
<keyword id="KW-0133">Cell shape</keyword>
<keyword id="KW-0961">Cell wall biogenesis/degradation</keyword>
<keyword id="KW-0903">Direct protein sequencing</keyword>
<keyword id="KW-0378">Hydrolase</keyword>
<keyword id="KW-0472">Membrane</keyword>
<keyword id="KW-0573">Peptidoglycan synthesis</keyword>
<keyword id="KW-1185">Reference proteome</keyword>
<keyword id="KW-0749">Sporulation</keyword>
<dbReference type="EMBL" id="L10629">
    <property type="protein sequence ID" value="AAA22640.1"/>
    <property type="molecule type" value="Genomic_DNA"/>
</dbReference>
<dbReference type="EMBL" id="Z94043">
    <property type="protein sequence ID" value="CAB08016.1"/>
    <property type="status" value="ALT_INIT"/>
    <property type="molecule type" value="Genomic_DNA"/>
</dbReference>
<dbReference type="EMBL" id="AL009126">
    <property type="protein sequence ID" value="CAB15449.1"/>
    <property type="molecule type" value="Genomic_DNA"/>
</dbReference>
<dbReference type="PIR" id="A36908">
    <property type="entry name" value="A36908"/>
</dbReference>
<dbReference type="RefSeq" id="NP_391324.1">
    <property type="nucleotide sequence ID" value="NC_000964.3"/>
</dbReference>
<dbReference type="RefSeq" id="WP_003243737.1">
    <property type="nucleotide sequence ID" value="NZ_OZ025638.1"/>
</dbReference>
<dbReference type="SMR" id="P32959"/>
<dbReference type="FunCoup" id="P32959">
    <property type="interactions" value="125"/>
</dbReference>
<dbReference type="STRING" id="224308.BSU34440"/>
<dbReference type="PaxDb" id="224308-BSU34440"/>
<dbReference type="EnsemblBacteria" id="CAB15449">
    <property type="protein sequence ID" value="CAB15449"/>
    <property type="gene ID" value="BSU_34440"/>
</dbReference>
<dbReference type="GeneID" id="938615"/>
<dbReference type="KEGG" id="bsu:BSU34440"/>
<dbReference type="PATRIC" id="fig|224308.179.peg.3731"/>
<dbReference type="eggNOG" id="COG1680">
    <property type="taxonomic scope" value="Bacteria"/>
</dbReference>
<dbReference type="InParanoid" id="P32959"/>
<dbReference type="OrthoDB" id="9803467at2"/>
<dbReference type="PhylomeDB" id="P32959"/>
<dbReference type="BioCyc" id="BSUB:BSU34440-MONOMER"/>
<dbReference type="UniPathway" id="UPA00219"/>
<dbReference type="Proteomes" id="UP000001570">
    <property type="component" value="Chromosome"/>
</dbReference>
<dbReference type="GO" id="GO:0016020">
    <property type="term" value="C:membrane"/>
    <property type="evidence" value="ECO:0007669"/>
    <property type="project" value="UniProtKB-KW"/>
</dbReference>
<dbReference type="GO" id="GO:0016787">
    <property type="term" value="F:hydrolase activity"/>
    <property type="evidence" value="ECO:0007669"/>
    <property type="project" value="UniProtKB-KW"/>
</dbReference>
<dbReference type="GO" id="GO:0071555">
    <property type="term" value="P:cell wall organization"/>
    <property type="evidence" value="ECO:0007669"/>
    <property type="project" value="UniProtKB-KW"/>
</dbReference>
<dbReference type="GO" id="GO:0009252">
    <property type="term" value="P:peptidoglycan biosynthetic process"/>
    <property type="evidence" value="ECO:0007669"/>
    <property type="project" value="UniProtKB-UniPathway"/>
</dbReference>
<dbReference type="GO" id="GO:0008360">
    <property type="term" value="P:regulation of cell shape"/>
    <property type="evidence" value="ECO:0007669"/>
    <property type="project" value="UniProtKB-KW"/>
</dbReference>
<dbReference type="GO" id="GO:0030435">
    <property type="term" value="P:sporulation resulting in formation of a cellular spore"/>
    <property type="evidence" value="ECO:0007669"/>
    <property type="project" value="UniProtKB-KW"/>
</dbReference>
<dbReference type="Gene3D" id="3.40.710.10">
    <property type="entry name" value="DD-peptidase/beta-lactamase superfamily"/>
    <property type="match status" value="1"/>
</dbReference>
<dbReference type="InterPro" id="IPR050491">
    <property type="entry name" value="Bact_CellWall_Synth/Modif"/>
</dbReference>
<dbReference type="InterPro" id="IPR001466">
    <property type="entry name" value="Beta-lactam-related"/>
</dbReference>
<dbReference type="InterPro" id="IPR012338">
    <property type="entry name" value="Beta-lactam/transpept-like"/>
</dbReference>
<dbReference type="InterPro" id="IPR021860">
    <property type="entry name" value="Peptidase_S12_Pab87-rel_C"/>
</dbReference>
<dbReference type="PANTHER" id="PTHR46825">
    <property type="entry name" value="D-ALANYL-D-ALANINE-CARBOXYPEPTIDASE/ENDOPEPTIDASE AMPH"/>
    <property type="match status" value="1"/>
</dbReference>
<dbReference type="PANTHER" id="PTHR46825:SF11">
    <property type="entry name" value="PENICILLIN-BINDING PROTEIN 4"/>
    <property type="match status" value="1"/>
</dbReference>
<dbReference type="Pfam" id="PF00144">
    <property type="entry name" value="Beta-lactamase"/>
    <property type="match status" value="1"/>
</dbReference>
<dbReference type="Pfam" id="PF11954">
    <property type="entry name" value="DUF3471"/>
    <property type="match status" value="1"/>
</dbReference>
<dbReference type="SUPFAM" id="SSF56601">
    <property type="entry name" value="beta-lactamase/transpeptidase-like"/>
    <property type="match status" value="1"/>
</dbReference>
<sequence length="451" mass="51437">MKQNKRKHLQTLFETLGEKHQFNGTVLAAEGGDILYHHSFGYAEMTEKRPLKTNSLFELASLSKPFTALGIILLEEKGILGYEDKVDRWLPGFPYQGVTIRHLLNHTSGLPDYMGWFFANWDSHKIAVNQDIVDMLMNEGLSGYFEPNEGWMYSNTGYVLLAVIIEKASGMSYADFIKTSIFLPAGMNETRVYNRRLSPERIDHYAYGYVYDVHSETYVLPDELEETNYVVYLDGIQGDGTVNSVTSDLFRFDQALYQDDFISKASKESAFSPVRLNNGETIDYGFGWVLQNSPEKGRIVSHSGGWPGYSTMMIRYIDHRKTLIYLSNKEEDTEYEQAILKAAEHILFGQPYDVPERPADKKKKAIDTAIYSRYVGSYLLQDGTAAQVTTENERLYLEIAGQLRLELFPSSETRFFLRALSVEVEFTLGEDAAKSFILYEDGSEEEAVRTK</sequence>
<name>PBPE_BACSU</name>
<protein>
    <recommendedName>
        <fullName>Penicillin-binding protein 4*</fullName>
        <shortName>PBP 4*</shortName>
    </recommendedName>
    <alternativeName>
        <fullName>PBP 4A</fullName>
    </alternativeName>
    <alternativeName>
        <fullName>Penicillin-binding protein E</fullName>
    </alternativeName>
</protein>
<evidence type="ECO:0000250" key="1"/>
<evidence type="ECO:0000269" key="2">
    <source>
    </source>
</evidence>
<evidence type="ECO:0000305" key="3"/>
<proteinExistence type="evidence at protein level"/>
<gene>
    <name type="primary">pbpE</name>
    <name type="ordered locus">BSU34440</name>
</gene>
<organism>
    <name type="scientific">Bacillus subtilis (strain 168)</name>
    <dbReference type="NCBI Taxonomy" id="224308"/>
    <lineage>
        <taxon>Bacteria</taxon>
        <taxon>Bacillati</taxon>
        <taxon>Bacillota</taxon>
        <taxon>Bacilli</taxon>
        <taxon>Bacillales</taxon>
        <taxon>Bacillaceae</taxon>
        <taxon>Bacillus</taxon>
    </lineage>
</organism>